<dbReference type="EMBL" id="AE014134">
    <property type="protein sequence ID" value="AAF51215.1"/>
    <property type="molecule type" value="Genomic_DNA"/>
</dbReference>
<dbReference type="RefSeq" id="NP_722835.1">
    <property type="nucleotide sequence ID" value="NM_164499.2"/>
</dbReference>
<dbReference type="SMR" id="Q9VQF9"/>
<dbReference type="BioGRID" id="534274">
    <property type="interactions" value="3"/>
</dbReference>
<dbReference type="ComplexPortal" id="CPX-2753">
    <property type="entry name" value="BLOC-1 complex"/>
</dbReference>
<dbReference type="ComplexPortal" id="CPX-2760">
    <property type="entry name" value="BORC complex"/>
</dbReference>
<dbReference type="FunCoup" id="Q9VQF9">
    <property type="interactions" value="192"/>
</dbReference>
<dbReference type="IntAct" id="Q9VQF9">
    <property type="interactions" value="7"/>
</dbReference>
<dbReference type="STRING" id="7227.FBpp0077417"/>
<dbReference type="PaxDb" id="7227-FBpp0077417"/>
<dbReference type="DNASU" id="3772677"/>
<dbReference type="EnsemblMetazoa" id="FBtr0077737">
    <property type="protein sequence ID" value="FBpp0077417"/>
    <property type="gene ID" value="FBgn0031455"/>
</dbReference>
<dbReference type="GeneID" id="3772677"/>
<dbReference type="KEGG" id="dme:Dmel_CG9958"/>
<dbReference type="UCSC" id="CG9958-RA">
    <property type="organism name" value="d. melanogaster"/>
</dbReference>
<dbReference type="AGR" id="FB:FBgn0031455"/>
<dbReference type="CTD" id="23557"/>
<dbReference type="FlyBase" id="FBgn0031455">
    <property type="gene designation" value="Snapin"/>
</dbReference>
<dbReference type="VEuPathDB" id="VectorBase:FBgn0031455"/>
<dbReference type="eggNOG" id="ENOG502S1VY">
    <property type="taxonomic scope" value="Eukaryota"/>
</dbReference>
<dbReference type="GeneTree" id="ENSGT00390000008274"/>
<dbReference type="HOGENOM" id="CLU_124640_0_0_1"/>
<dbReference type="InParanoid" id="Q9VQF9"/>
<dbReference type="OMA" id="LNMHIRE"/>
<dbReference type="OrthoDB" id="5399166at2759"/>
<dbReference type="PhylomeDB" id="Q9VQF9"/>
<dbReference type="Reactome" id="R-DME-432722">
    <property type="pathway name" value="Golgi Associated Vesicle Biogenesis"/>
</dbReference>
<dbReference type="BioGRID-ORCS" id="3772677">
    <property type="hits" value="0 hits in 1 CRISPR screen"/>
</dbReference>
<dbReference type="GenomeRNAi" id="3772677"/>
<dbReference type="PRO" id="PR:Q9VQF9"/>
<dbReference type="Proteomes" id="UP000000803">
    <property type="component" value="Chromosome 2L"/>
</dbReference>
<dbReference type="Bgee" id="FBgn0031455">
    <property type="expression patterns" value="Expressed in saliva-secreting gland and 9 other cell types or tissues"/>
</dbReference>
<dbReference type="GO" id="GO:0031083">
    <property type="term" value="C:BLOC-1 complex"/>
    <property type="evidence" value="ECO:0000250"/>
    <property type="project" value="FlyBase"/>
</dbReference>
<dbReference type="GO" id="GO:0005829">
    <property type="term" value="C:cytosol"/>
    <property type="evidence" value="ECO:0007669"/>
    <property type="project" value="UniProtKB-SubCell"/>
</dbReference>
<dbReference type="GO" id="GO:0016020">
    <property type="term" value="C:membrane"/>
    <property type="evidence" value="ECO:0007669"/>
    <property type="project" value="UniProtKB-SubCell"/>
</dbReference>
<dbReference type="GO" id="GO:0030141">
    <property type="term" value="C:secretory granule"/>
    <property type="evidence" value="ECO:0000318"/>
    <property type="project" value="GO_Central"/>
</dbReference>
<dbReference type="GO" id="GO:0008021">
    <property type="term" value="C:synaptic vesicle"/>
    <property type="evidence" value="ECO:0000314"/>
    <property type="project" value="FlyBase"/>
</dbReference>
<dbReference type="GO" id="GO:0000149">
    <property type="term" value="F:SNARE binding"/>
    <property type="evidence" value="ECO:0000318"/>
    <property type="project" value="GO_Central"/>
</dbReference>
<dbReference type="GO" id="GO:0061909">
    <property type="term" value="P:autophagosome-lysosome fusion"/>
    <property type="evidence" value="ECO:0000315"/>
    <property type="project" value="FlyBase"/>
</dbReference>
<dbReference type="GO" id="GO:0008333">
    <property type="term" value="P:endosome to lysosome transport"/>
    <property type="evidence" value="ECO:0000318"/>
    <property type="project" value="GO_Central"/>
</dbReference>
<dbReference type="GO" id="GO:0042592">
    <property type="term" value="P:homeostatic process"/>
    <property type="evidence" value="ECO:0000315"/>
    <property type="project" value="FlyBase"/>
</dbReference>
<dbReference type="GO" id="GO:0006886">
    <property type="term" value="P:intracellular protein transport"/>
    <property type="evidence" value="ECO:0007669"/>
    <property type="project" value="InterPro"/>
</dbReference>
<dbReference type="GO" id="GO:0032418">
    <property type="term" value="P:lysosome localization"/>
    <property type="evidence" value="ECO:0000318"/>
    <property type="project" value="GO_Central"/>
</dbReference>
<dbReference type="GO" id="GO:0007040">
    <property type="term" value="P:lysosome organization"/>
    <property type="evidence" value="ECO:0000318"/>
    <property type="project" value="GO_Central"/>
</dbReference>
<dbReference type="GO" id="GO:0007269">
    <property type="term" value="P:neurotransmitter secretion"/>
    <property type="evidence" value="ECO:0000303"/>
    <property type="project" value="FlyBase"/>
</dbReference>
<dbReference type="GO" id="GO:0016079">
    <property type="term" value="P:synaptic vesicle exocytosis"/>
    <property type="evidence" value="ECO:0000250"/>
    <property type="project" value="FlyBase"/>
</dbReference>
<dbReference type="GO" id="GO:0016082">
    <property type="term" value="P:synaptic vesicle priming"/>
    <property type="evidence" value="ECO:0000303"/>
    <property type="project" value="FlyBase"/>
</dbReference>
<dbReference type="GO" id="GO:0048489">
    <property type="term" value="P:synaptic vesicle transport"/>
    <property type="evidence" value="ECO:0000318"/>
    <property type="project" value="GO_Central"/>
</dbReference>
<dbReference type="InterPro" id="IPR017246">
    <property type="entry name" value="Snapin"/>
</dbReference>
<dbReference type="InterPro" id="IPR028119">
    <property type="entry name" value="Snapin/Pallidin/Snn1"/>
</dbReference>
<dbReference type="PANTHER" id="PTHR31305">
    <property type="entry name" value="SNARE-ASSOCIATED PROTEIN SNAPIN"/>
    <property type="match status" value="1"/>
</dbReference>
<dbReference type="PANTHER" id="PTHR31305:SF2">
    <property type="entry name" value="SNARE-ASSOCIATED PROTEIN SNAPIN"/>
    <property type="match status" value="1"/>
</dbReference>
<dbReference type="Pfam" id="PF14712">
    <property type="entry name" value="Snapin_Pallidin"/>
    <property type="match status" value="1"/>
</dbReference>
<dbReference type="PIRSF" id="PIRSF037631">
    <property type="entry name" value="Snapin"/>
    <property type="match status" value="1"/>
</dbReference>
<keyword id="KW-0175">Coiled coil</keyword>
<keyword id="KW-0963">Cytoplasm</keyword>
<keyword id="KW-0472">Membrane</keyword>
<keyword id="KW-1185">Reference proteome</keyword>
<sequence length="134" mass="15056">MDSDSTVTSLEENTENFCTNPTRDILAEGITNLFKPTIERLDERVASTIQLQAELRGQLDALAAQLRDIEKAQSQIPEFADKVKELLNVKHKVTVISNVLVTSQERLTGLHKLIEKEQRRRQALLDSALSTNIS</sequence>
<reference key="1">
    <citation type="journal article" date="2000" name="Science">
        <title>The genome sequence of Drosophila melanogaster.</title>
        <authorList>
            <person name="Adams M.D."/>
            <person name="Celniker S.E."/>
            <person name="Holt R.A."/>
            <person name="Evans C.A."/>
            <person name="Gocayne J.D."/>
            <person name="Amanatides P.G."/>
            <person name="Scherer S.E."/>
            <person name="Li P.W."/>
            <person name="Hoskins R.A."/>
            <person name="Galle R.F."/>
            <person name="George R.A."/>
            <person name="Lewis S.E."/>
            <person name="Richards S."/>
            <person name="Ashburner M."/>
            <person name="Henderson S.N."/>
            <person name="Sutton G.G."/>
            <person name="Wortman J.R."/>
            <person name="Yandell M.D."/>
            <person name="Zhang Q."/>
            <person name="Chen L.X."/>
            <person name="Brandon R.C."/>
            <person name="Rogers Y.-H.C."/>
            <person name="Blazej R.G."/>
            <person name="Champe M."/>
            <person name="Pfeiffer B.D."/>
            <person name="Wan K.H."/>
            <person name="Doyle C."/>
            <person name="Baxter E.G."/>
            <person name="Helt G."/>
            <person name="Nelson C.R."/>
            <person name="Miklos G.L.G."/>
            <person name="Abril J.F."/>
            <person name="Agbayani A."/>
            <person name="An H.-J."/>
            <person name="Andrews-Pfannkoch C."/>
            <person name="Baldwin D."/>
            <person name="Ballew R.M."/>
            <person name="Basu A."/>
            <person name="Baxendale J."/>
            <person name="Bayraktaroglu L."/>
            <person name="Beasley E.M."/>
            <person name="Beeson K.Y."/>
            <person name="Benos P.V."/>
            <person name="Berman B.P."/>
            <person name="Bhandari D."/>
            <person name="Bolshakov S."/>
            <person name="Borkova D."/>
            <person name="Botchan M.R."/>
            <person name="Bouck J."/>
            <person name="Brokstein P."/>
            <person name="Brottier P."/>
            <person name="Burtis K.C."/>
            <person name="Busam D.A."/>
            <person name="Butler H."/>
            <person name="Cadieu E."/>
            <person name="Center A."/>
            <person name="Chandra I."/>
            <person name="Cherry J.M."/>
            <person name="Cawley S."/>
            <person name="Dahlke C."/>
            <person name="Davenport L.B."/>
            <person name="Davies P."/>
            <person name="de Pablos B."/>
            <person name="Delcher A."/>
            <person name="Deng Z."/>
            <person name="Mays A.D."/>
            <person name="Dew I."/>
            <person name="Dietz S.M."/>
            <person name="Dodson K."/>
            <person name="Doup L.E."/>
            <person name="Downes M."/>
            <person name="Dugan-Rocha S."/>
            <person name="Dunkov B.C."/>
            <person name="Dunn P."/>
            <person name="Durbin K.J."/>
            <person name="Evangelista C.C."/>
            <person name="Ferraz C."/>
            <person name="Ferriera S."/>
            <person name="Fleischmann W."/>
            <person name="Fosler C."/>
            <person name="Gabrielian A.E."/>
            <person name="Garg N.S."/>
            <person name="Gelbart W.M."/>
            <person name="Glasser K."/>
            <person name="Glodek A."/>
            <person name="Gong F."/>
            <person name="Gorrell J.H."/>
            <person name="Gu Z."/>
            <person name="Guan P."/>
            <person name="Harris M."/>
            <person name="Harris N.L."/>
            <person name="Harvey D.A."/>
            <person name="Heiman T.J."/>
            <person name="Hernandez J.R."/>
            <person name="Houck J."/>
            <person name="Hostin D."/>
            <person name="Houston K.A."/>
            <person name="Howland T.J."/>
            <person name="Wei M.-H."/>
            <person name="Ibegwam C."/>
            <person name="Jalali M."/>
            <person name="Kalush F."/>
            <person name="Karpen G.H."/>
            <person name="Ke Z."/>
            <person name="Kennison J.A."/>
            <person name="Ketchum K.A."/>
            <person name="Kimmel B.E."/>
            <person name="Kodira C.D."/>
            <person name="Kraft C.L."/>
            <person name="Kravitz S."/>
            <person name="Kulp D."/>
            <person name="Lai Z."/>
            <person name="Lasko P."/>
            <person name="Lei Y."/>
            <person name="Levitsky A.A."/>
            <person name="Li J.H."/>
            <person name="Li Z."/>
            <person name="Liang Y."/>
            <person name="Lin X."/>
            <person name="Liu X."/>
            <person name="Mattei B."/>
            <person name="McIntosh T.C."/>
            <person name="McLeod M.P."/>
            <person name="McPherson D."/>
            <person name="Merkulov G."/>
            <person name="Milshina N.V."/>
            <person name="Mobarry C."/>
            <person name="Morris J."/>
            <person name="Moshrefi A."/>
            <person name="Mount S.M."/>
            <person name="Moy M."/>
            <person name="Murphy B."/>
            <person name="Murphy L."/>
            <person name="Muzny D.M."/>
            <person name="Nelson D.L."/>
            <person name="Nelson D.R."/>
            <person name="Nelson K.A."/>
            <person name="Nixon K."/>
            <person name="Nusskern D.R."/>
            <person name="Pacleb J.M."/>
            <person name="Palazzolo M."/>
            <person name="Pittman G.S."/>
            <person name="Pan S."/>
            <person name="Pollard J."/>
            <person name="Puri V."/>
            <person name="Reese M.G."/>
            <person name="Reinert K."/>
            <person name="Remington K."/>
            <person name="Saunders R.D.C."/>
            <person name="Scheeler F."/>
            <person name="Shen H."/>
            <person name="Shue B.C."/>
            <person name="Siden-Kiamos I."/>
            <person name="Simpson M."/>
            <person name="Skupski M.P."/>
            <person name="Smith T.J."/>
            <person name="Spier E."/>
            <person name="Spradling A.C."/>
            <person name="Stapleton M."/>
            <person name="Strong R."/>
            <person name="Sun E."/>
            <person name="Svirskas R."/>
            <person name="Tector C."/>
            <person name="Turner R."/>
            <person name="Venter E."/>
            <person name="Wang A.H."/>
            <person name="Wang X."/>
            <person name="Wang Z.-Y."/>
            <person name="Wassarman D.A."/>
            <person name="Weinstock G.M."/>
            <person name="Weissenbach J."/>
            <person name="Williams S.M."/>
            <person name="Woodage T."/>
            <person name="Worley K.C."/>
            <person name="Wu D."/>
            <person name="Yang S."/>
            <person name="Yao Q.A."/>
            <person name="Ye J."/>
            <person name="Yeh R.-F."/>
            <person name="Zaveri J.S."/>
            <person name="Zhan M."/>
            <person name="Zhang G."/>
            <person name="Zhao Q."/>
            <person name="Zheng L."/>
            <person name="Zheng X.H."/>
            <person name="Zhong F.N."/>
            <person name="Zhong W."/>
            <person name="Zhou X."/>
            <person name="Zhu S.C."/>
            <person name="Zhu X."/>
            <person name="Smith H.O."/>
            <person name="Gibbs R.A."/>
            <person name="Myers E.W."/>
            <person name="Rubin G.M."/>
            <person name="Venter J.C."/>
        </authorList>
    </citation>
    <scope>NUCLEOTIDE SEQUENCE [LARGE SCALE GENOMIC DNA]</scope>
    <source>
        <strain>Berkeley</strain>
    </source>
</reference>
<reference key="2">
    <citation type="journal article" date="2002" name="Genome Biol.">
        <title>Annotation of the Drosophila melanogaster euchromatic genome: a systematic review.</title>
        <authorList>
            <person name="Misra S."/>
            <person name="Crosby M.A."/>
            <person name="Mungall C.J."/>
            <person name="Matthews B.B."/>
            <person name="Campbell K.S."/>
            <person name="Hradecky P."/>
            <person name="Huang Y."/>
            <person name="Kaminker J.S."/>
            <person name="Millburn G.H."/>
            <person name="Prochnik S.E."/>
            <person name="Smith C.D."/>
            <person name="Tupy J.L."/>
            <person name="Whitfield E.J."/>
            <person name="Bayraktaroglu L."/>
            <person name="Berman B.P."/>
            <person name="Bettencourt B.R."/>
            <person name="Celniker S.E."/>
            <person name="de Grey A.D.N.J."/>
            <person name="Drysdale R.A."/>
            <person name="Harris N.L."/>
            <person name="Richter J."/>
            <person name="Russo S."/>
            <person name="Schroeder A.J."/>
            <person name="Shu S.Q."/>
            <person name="Stapleton M."/>
            <person name="Yamada C."/>
            <person name="Ashburner M."/>
            <person name="Gelbart W.M."/>
            <person name="Rubin G.M."/>
            <person name="Lewis S.E."/>
        </authorList>
    </citation>
    <scope>GENOME REANNOTATION</scope>
    <source>
        <strain>Berkeley</strain>
    </source>
</reference>
<reference key="3">
    <citation type="journal article" date="2010" name="Hum. Mol. Genet.">
        <title>Genetic modifiers of abnormal organelle biogenesis in a Drosophila model of BLOC-1 deficiency.</title>
        <authorList>
            <person name="Cheli V.T."/>
            <person name="Daniels R.W."/>
            <person name="Godoy R."/>
            <person name="Hoyle D.J."/>
            <person name="Kandachar V."/>
            <person name="Starcevic M."/>
            <person name="Martinez-Agosto J.A."/>
            <person name="Poole S."/>
            <person name="DiAntonio A."/>
            <person name="Lloyd V.K."/>
            <person name="Chang H.C."/>
            <person name="Krantz D.E."/>
            <person name="Dell'Angelica E.C."/>
        </authorList>
    </citation>
    <scope>IDENTIFICATION IN THE BLOC-1 COMPLEX</scope>
    <scope>FUNCTION</scope>
    <scope>INTERACTION WITH BLOS2 AND DYSB</scope>
</reference>
<proteinExistence type="evidence at protein level"/>
<evidence type="ECO:0000250" key="1">
    <source>
        <dbReference type="UniProtKB" id="O95295"/>
    </source>
</evidence>
<evidence type="ECO:0000250" key="2">
    <source>
        <dbReference type="UniProtKB" id="Q9Z266"/>
    </source>
</evidence>
<evidence type="ECO:0000255" key="3"/>
<evidence type="ECO:0000269" key="4">
    <source>
    </source>
</evidence>
<evidence type="ECO:0000305" key="5"/>
<evidence type="ECO:0000312" key="6">
    <source>
        <dbReference type="FlyBase" id="FBgn0031455"/>
    </source>
</evidence>
<feature type="chain" id="PRO_0000420204" description="SNAPIN protein homolog">
    <location>
        <begin position="1"/>
        <end position="134"/>
    </location>
</feature>
<feature type="coiled-coil region" evidence="3">
    <location>
        <begin position="50"/>
        <end position="124"/>
    </location>
</feature>
<accession>Q9VQF9</accession>
<name>SNAPN_DROME</name>
<comment type="function">
    <text evidence="1 4">Component of the biogenesis of lysosome-related organelles complex-1 (BLOC-1) involved in pigment granule biogenesis (PubMed:20015953). May participate in the coupling of lysosomes to microtubule plus-end-directed kinesin motor (By similarity).</text>
</comment>
<comment type="subunit">
    <text evidence="4">Component of the biogenesis of lysosome-related organelles complex-1 (BLOC-1) composed of Blos1, Blos2, Blos3, Blos4, Dysb, Muted, Pldn and Snapin. Interacts with Blos2 and Dysb.</text>
</comment>
<comment type="subcellular location">
    <subcellularLocation>
        <location evidence="2">Membrane</location>
        <topology evidence="2">Peripheral membrane protein</topology>
        <orientation evidence="2">Cytoplasmic side</orientation>
    </subcellularLocation>
    <subcellularLocation>
        <location evidence="2">Cytoplasm</location>
        <location evidence="2">Cytosol</location>
    </subcellularLocation>
</comment>
<comment type="similarity">
    <text evidence="5">Belongs to the SNAPIN family.</text>
</comment>
<organism>
    <name type="scientific">Drosophila melanogaster</name>
    <name type="common">Fruit fly</name>
    <dbReference type="NCBI Taxonomy" id="7227"/>
    <lineage>
        <taxon>Eukaryota</taxon>
        <taxon>Metazoa</taxon>
        <taxon>Ecdysozoa</taxon>
        <taxon>Arthropoda</taxon>
        <taxon>Hexapoda</taxon>
        <taxon>Insecta</taxon>
        <taxon>Pterygota</taxon>
        <taxon>Neoptera</taxon>
        <taxon>Endopterygota</taxon>
        <taxon>Diptera</taxon>
        <taxon>Brachycera</taxon>
        <taxon>Muscomorpha</taxon>
        <taxon>Ephydroidea</taxon>
        <taxon>Drosophilidae</taxon>
        <taxon>Drosophila</taxon>
        <taxon>Sophophora</taxon>
    </lineage>
</organism>
<protein>
    <recommendedName>
        <fullName>SNAPIN protein homolog</fullName>
    </recommendedName>
    <alternativeName>
        <fullName>Biogenesis of lysosome-related organelles complex 1 subunit 7</fullName>
        <shortName>BLOC-1 subunit 7</shortName>
    </alternativeName>
</protein>
<gene>
    <name evidence="6" type="primary">Snapin</name>
    <name evidence="6" type="ORF">CG9958</name>
</gene>